<comment type="function">
    <text evidence="1">NDH-1 shuttles electrons from NADH, via FMN and iron-sulfur (Fe-S) centers, to quinones in the respiratory chain. The immediate electron acceptor for the enzyme in this species is believed to be ubiquinone. Couples the redox reaction to proton translocation (for every two electrons transferred, four hydrogen ions are translocated across the cytoplasmic membrane), and thus conserves the redox energy in a proton gradient. This subunit may bind ubiquinone.</text>
</comment>
<comment type="catalytic activity">
    <reaction evidence="1">
        <text>a quinone + NADH + 5 H(+)(in) = a quinol + NAD(+) + 4 H(+)(out)</text>
        <dbReference type="Rhea" id="RHEA:57888"/>
        <dbReference type="ChEBI" id="CHEBI:15378"/>
        <dbReference type="ChEBI" id="CHEBI:24646"/>
        <dbReference type="ChEBI" id="CHEBI:57540"/>
        <dbReference type="ChEBI" id="CHEBI:57945"/>
        <dbReference type="ChEBI" id="CHEBI:132124"/>
    </reaction>
</comment>
<comment type="subunit">
    <text evidence="1">NDH-1 is composed of 14 different subunits. Subunits NuoA, H, J, K, L, M, N constitute the membrane sector of the complex.</text>
</comment>
<comment type="subcellular location">
    <subcellularLocation>
        <location evidence="1">Cell inner membrane</location>
        <topology evidence="1">Multi-pass membrane protein</topology>
    </subcellularLocation>
</comment>
<comment type="similarity">
    <text evidence="1">Belongs to the complex I subunit 1 family.</text>
</comment>
<dbReference type="EC" id="7.1.1.-" evidence="1"/>
<dbReference type="EMBL" id="CP000449">
    <property type="protein sequence ID" value="ABI65654.1"/>
    <property type="molecule type" value="Genomic_DNA"/>
</dbReference>
<dbReference type="RefSeq" id="WP_011643301.1">
    <property type="nucleotide sequence ID" value="NC_008347.1"/>
</dbReference>
<dbReference type="SMR" id="Q0APY3"/>
<dbReference type="STRING" id="394221.Mmar10_1362"/>
<dbReference type="KEGG" id="mmr:Mmar10_1362"/>
<dbReference type="eggNOG" id="COG1005">
    <property type="taxonomic scope" value="Bacteria"/>
</dbReference>
<dbReference type="HOGENOM" id="CLU_015134_0_1_5"/>
<dbReference type="OrthoDB" id="9803734at2"/>
<dbReference type="Proteomes" id="UP000001964">
    <property type="component" value="Chromosome"/>
</dbReference>
<dbReference type="GO" id="GO:0005886">
    <property type="term" value="C:plasma membrane"/>
    <property type="evidence" value="ECO:0007669"/>
    <property type="project" value="UniProtKB-SubCell"/>
</dbReference>
<dbReference type="GO" id="GO:0003954">
    <property type="term" value="F:NADH dehydrogenase activity"/>
    <property type="evidence" value="ECO:0007669"/>
    <property type="project" value="TreeGrafter"/>
</dbReference>
<dbReference type="GO" id="GO:0016655">
    <property type="term" value="F:oxidoreductase activity, acting on NAD(P)H, quinone or similar compound as acceptor"/>
    <property type="evidence" value="ECO:0007669"/>
    <property type="project" value="UniProtKB-UniRule"/>
</dbReference>
<dbReference type="GO" id="GO:0048038">
    <property type="term" value="F:quinone binding"/>
    <property type="evidence" value="ECO:0007669"/>
    <property type="project" value="UniProtKB-KW"/>
</dbReference>
<dbReference type="GO" id="GO:0009060">
    <property type="term" value="P:aerobic respiration"/>
    <property type="evidence" value="ECO:0007669"/>
    <property type="project" value="TreeGrafter"/>
</dbReference>
<dbReference type="HAMAP" id="MF_01350">
    <property type="entry name" value="NDH1_NuoH"/>
    <property type="match status" value="1"/>
</dbReference>
<dbReference type="InterPro" id="IPR001694">
    <property type="entry name" value="NADH_UbQ_OxRdtase_su1/FPO"/>
</dbReference>
<dbReference type="InterPro" id="IPR018086">
    <property type="entry name" value="NADH_UbQ_OxRdtase_su1_CS"/>
</dbReference>
<dbReference type="NCBIfam" id="NF004745">
    <property type="entry name" value="PRK06076.1-6"/>
    <property type="match status" value="1"/>
</dbReference>
<dbReference type="PANTHER" id="PTHR11432">
    <property type="entry name" value="NADH DEHYDROGENASE SUBUNIT 1"/>
    <property type="match status" value="1"/>
</dbReference>
<dbReference type="PANTHER" id="PTHR11432:SF3">
    <property type="entry name" value="NADH-UBIQUINONE OXIDOREDUCTASE CHAIN 1"/>
    <property type="match status" value="1"/>
</dbReference>
<dbReference type="Pfam" id="PF00146">
    <property type="entry name" value="NADHdh"/>
    <property type="match status" value="1"/>
</dbReference>
<dbReference type="PROSITE" id="PS00668">
    <property type="entry name" value="COMPLEX1_ND1_2"/>
    <property type="match status" value="1"/>
</dbReference>
<evidence type="ECO:0000255" key="1">
    <source>
        <dbReference type="HAMAP-Rule" id="MF_01350"/>
    </source>
</evidence>
<name>NUOH_MARMM</name>
<proteinExistence type="inferred from homology"/>
<organism>
    <name type="scientific">Maricaulis maris (strain MCS10)</name>
    <name type="common">Caulobacter maris</name>
    <dbReference type="NCBI Taxonomy" id="394221"/>
    <lineage>
        <taxon>Bacteria</taxon>
        <taxon>Pseudomonadati</taxon>
        <taxon>Pseudomonadota</taxon>
        <taxon>Alphaproteobacteria</taxon>
        <taxon>Maricaulales</taxon>
        <taxon>Maricaulaceae</taxon>
        <taxon>Maricaulis</taxon>
    </lineage>
</organism>
<keyword id="KW-0997">Cell inner membrane</keyword>
<keyword id="KW-1003">Cell membrane</keyword>
<keyword id="KW-0472">Membrane</keyword>
<keyword id="KW-0520">NAD</keyword>
<keyword id="KW-0874">Quinone</keyword>
<keyword id="KW-1185">Reference proteome</keyword>
<keyword id="KW-1278">Translocase</keyword>
<keyword id="KW-0812">Transmembrane</keyword>
<keyword id="KW-1133">Transmembrane helix</keyword>
<keyword id="KW-0830">Ubiquinone</keyword>
<feature type="chain" id="PRO_0000298823" description="NADH-quinone oxidoreductase subunit H">
    <location>
        <begin position="1"/>
        <end position="356"/>
    </location>
</feature>
<feature type="transmembrane region" description="Helical" evidence="1">
    <location>
        <begin position="16"/>
        <end position="36"/>
    </location>
</feature>
<feature type="transmembrane region" description="Helical" evidence="1">
    <location>
        <begin position="52"/>
        <end position="72"/>
    </location>
</feature>
<feature type="transmembrane region" description="Helical" evidence="1">
    <location>
        <begin position="85"/>
        <end position="105"/>
    </location>
</feature>
<feature type="transmembrane region" description="Helical" evidence="1">
    <location>
        <begin position="117"/>
        <end position="137"/>
    </location>
</feature>
<feature type="transmembrane region" description="Helical" evidence="1">
    <location>
        <begin position="163"/>
        <end position="183"/>
    </location>
</feature>
<feature type="transmembrane region" description="Helical" evidence="1">
    <location>
        <begin position="201"/>
        <end position="221"/>
    </location>
</feature>
<feature type="transmembrane region" description="Helical" evidence="1">
    <location>
        <begin position="254"/>
        <end position="274"/>
    </location>
</feature>
<feature type="transmembrane region" description="Helical" evidence="1">
    <location>
        <begin position="295"/>
        <end position="315"/>
    </location>
</feature>
<feature type="transmembrane region" description="Helical" evidence="1">
    <location>
        <begin position="334"/>
        <end position="354"/>
    </location>
</feature>
<reference key="1">
    <citation type="submission" date="2006-08" db="EMBL/GenBank/DDBJ databases">
        <title>Complete sequence of Maricaulis maris MCS10.</title>
        <authorList>
            <consortium name="US DOE Joint Genome Institute"/>
            <person name="Copeland A."/>
            <person name="Lucas S."/>
            <person name="Lapidus A."/>
            <person name="Barry K."/>
            <person name="Detter J.C."/>
            <person name="Glavina del Rio T."/>
            <person name="Hammon N."/>
            <person name="Israni S."/>
            <person name="Dalin E."/>
            <person name="Tice H."/>
            <person name="Pitluck S."/>
            <person name="Saunders E."/>
            <person name="Brettin T."/>
            <person name="Bruce D."/>
            <person name="Han C."/>
            <person name="Tapia R."/>
            <person name="Gilna P."/>
            <person name="Schmutz J."/>
            <person name="Larimer F."/>
            <person name="Land M."/>
            <person name="Hauser L."/>
            <person name="Kyrpides N."/>
            <person name="Mikhailova N."/>
            <person name="Viollier P."/>
            <person name="Stephens C."/>
            <person name="Richardson P."/>
        </authorList>
    </citation>
    <scope>NUCLEOTIDE SEQUENCE [LARGE SCALE GENOMIC DNA]</scope>
    <source>
        <strain>MCS10</strain>
    </source>
</reference>
<accession>Q0APY3</accession>
<protein>
    <recommendedName>
        <fullName evidence="1">NADH-quinone oxidoreductase subunit H</fullName>
        <ecNumber evidence="1">7.1.1.-</ecNumber>
    </recommendedName>
    <alternativeName>
        <fullName evidence="1">NADH dehydrogenase I subunit H</fullName>
    </alternativeName>
    <alternativeName>
        <fullName evidence="1">NDH-1 subunit H</fullName>
    </alternativeName>
</protein>
<gene>
    <name evidence="1" type="primary">nuoH</name>
    <name type="ordered locus">Mmar10_1362</name>
</gene>
<sequence>MTDFIEQFGVWGGFGIAVLQILAFAVVLLISLAFLLLMDRKVWAAVQMRKGPNVVGAFGLLQSFADFFKFVFKEIVVPAGADRSLYLLAPLITLILAFVTWAVVPAAPGWVIADLNVGILYLFAMSSLGVYGIIIGGWASNSKYPFLGALRSAAQMVSYEVSIGFIIVTVLLFAGSMNLSEIIEMQGGGFWNWNVLSFHAWPMPMFLVMIPMAVIFFISALAETNRPPFDLPEAESELVAGYQVEYSSTPYLLFMVGEYLNIVLMCAMTAILFFGGWNDPFGLDVSGWPYLASHAWYFFWFAAKIVFFFFMFAMVKALVPRYRYDQLMRLGWKIFLPISLAAVALVGAAVVYGPQG</sequence>